<organism>
    <name type="scientific">Candida glabrata (strain ATCC 2001 / BCRC 20586 / JCM 3761 / NBRC 0622 / NRRL Y-65 / CBS 138)</name>
    <name type="common">Yeast</name>
    <name type="synonym">Nakaseomyces glabratus</name>
    <dbReference type="NCBI Taxonomy" id="284593"/>
    <lineage>
        <taxon>Eukaryota</taxon>
        <taxon>Fungi</taxon>
        <taxon>Dikarya</taxon>
        <taxon>Ascomycota</taxon>
        <taxon>Saccharomycotina</taxon>
        <taxon>Saccharomycetes</taxon>
        <taxon>Saccharomycetales</taxon>
        <taxon>Saccharomycetaceae</taxon>
        <taxon>Nakaseomyces</taxon>
    </lineage>
</organism>
<dbReference type="EC" id="2.4.1.141"/>
<dbReference type="EMBL" id="CR380950">
    <property type="protein sequence ID" value="CAG58589.1"/>
    <property type="molecule type" value="Genomic_DNA"/>
</dbReference>
<dbReference type="RefSeq" id="XP_445678.1">
    <property type="nucleotide sequence ID" value="XM_445678.1"/>
</dbReference>
<dbReference type="SMR" id="Q6FVR6"/>
<dbReference type="FunCoup" id="Q6FVR6">
    <property type="interactions" value="348"/>
</dbReference>
<dbReference type="STRING" id="284593.Q6FVR6"/>
<dbReference type="EnsemblFungi" id="CAGL0D06270g-T">
    <property type="protein sequence ID" value="CAGL0D06270g-T-p1"/>
    <property type="gene ID" value="CAGL0D06270g"/>
</dbReference>
<dbReference type="KEGG" id="cgr:2886968"/>
<dbReference type="CGD" id="CAL0128497">
    <property type="gene designation" value="CAGL0D06270g"/>
</dbReference>
<dbReference type="VEuPathDB" id="FungiDB:CAGL0D06270g"/>
<dbReference type="eggNOG" id="KOG3349">
    <property type="taxonomic scope" value="Eukaryota"/>
</dbReference>
<dbReference type="HOGENOM" id="CLU_085408_2_0_1"/>
<dbReference type="InParanoid" id="Q6FVR6"/>
<dbReference type="OMA" id="ILDAWKM"/>
<dbReference type="Proteomes" id="UP000002428">
    <property type="component" value="Chromosome D"/>
</dbReference>
<dbReference type="GO" id="GO:0098548">
    <property type="term" value="C:cytoplasmic side of Golgi membrane"/>
    <property type="evidence" value="ECO:0007669"/>
    <property type="project" value="EnsemblFungi"/>
</dbReference>
<dbReference type="GO" id="GO:0005829">
    <property type="term" value="C:cytosol"/>
    <property type="evidence" value="ECO:0007669"/>
    <property type="project" value="EnsemblFungi"/>
</dbReference>
<dbReference type="GO" id="GO:0043541">
    <property type="term" value="C:UDP-N-acetylglucosamine transferase complex"/>
    <property type="evidence" value="ECO:0007669"/>
    <property type="project" value="EnsemblFungi"/>
</dbReference>
<dbReference type="GO" id="GO:0042802">
    <property type="term" value="F:identical protein binding"/>
    <property type="evidence" value="ECO:0007669"/>
    <property type="project" value="EnsemblFungi"/>
</dbReference>
<dbReference type="GO" id="GO:0004577">
    <property type="term" value="F:N-acetylglucosaminyldiphosphodolichol N-acetylglucosaminyltransferase activity"/>
    <property type="evidence" value="ECO:0007669"/>
    <property type="project" value="UniProtKB-EC"/>
</dbReference>
<dbReference type="GO" id="GO:0006488">
    <property type="term" value="P:dolichol-linked oligosaccharide biosynthetic process"/>
    <property type="evidence" value="ECO:0007669"/>
    <property type="project" value="EnsemblFungi"/>
</dbReference>
<dbReference type="Gene3D" id="3.40.50.2000">
    <property type="entry name" value="Glycogen Phosphorylase B"/>
    <property type="match status" value="1"/>
</dbReference>
<dbReference type="InterPro" id="IPR007235">
    <property type="entry name" value="Glyco_trans_28_C"/>
</dbReference>
<dbReference type="InterPro" id="IPR052474">
    <property type="entry name" value="UDP-GlcNAc_transferase"/>
</dbReference>
<dbReference type="PANTHER" id="PTHR47043">
    <property type="entry name" value="UDP-N-ACETYLGLUCOSAMINE TRANSFERASE SUBUNIT ALG13"/>
    <property type="match status" value="1"/>
</dbReference>
<dbReference type="PANTHER" id="PTHR47043:SF1">
    <property type="entry name" value="UDP-N-ACETYLGLUCOSAMINE TRANSFERASE SUBUNIT ALG13"/>
    <property type="match status" value="1"/>
</dbReference>
<dbReference type="Pfam" id="PF04101">
    <property type="entry name" value="Glyco_tran_28_C"/>
    <property type="match status" value="1"/>
</dbReference>
<feature type="chain" id="PRO_0000215599" description="UDP-N-acetylglucosamine transferase subunit ALG13">
    <location>
        <begin position="1"/>
        <end position="198"/>
    </location>
</feature>
<gene>
    <name type="primary">ALG13</name>
    <name type="ordered locus">CAGL0D06270g</name>
</gene>
<reference key="1">
    <citation type="journal article" date="2004" name="Nature">
        <title>Genome evolution in yeasts.</title>
        <authorList>
            <person name="Dujon B."/>
            <person name="Sherman D."/>
            <person name="Fischer G."/>
            <person name="Durrens P."/>
            <person name="Casaregola S."/>
            <person name="Lafontaine I."/>
            <person name="de Montigny J."/>
            <person name="Marck C."/>
            <person name="Neuveglise C."/>
            <person name="Talla E."/>
            <person name="Goffard N."/>
            <person name="Frangeul L."/>
            <person name="Aigle M."/>
            <person name="Anthouard V."/>
            <person name="Babour A."/>
            <person name="Barbe V."/>
            <person name="Barnay S."/>
            <person name="Blanchin S."/>
            <person name="Beckerich J.-M."/>
            <person name="Beyne E."/>
            <person name="Bleykasten C."/>
            <person name="Boisrame A."/>
            <person name="Boyer J."/>
            <person name="Cattolico L."/>
            <person name="Confanioleri F."/>
            <person name="de Daruvar A."/>
            <person name="Despons L."/>
            <person name="Fabre E."/>
            <person name="Fairhead C."/>
            <person name="Ferry-Dumazet H."/>
            <person name="Groppi A."/>
            <person name="Hantraye F."/>
            <person name="Hennequin C."/>
            <person name="Jauniaux N."/>
            <person name="Joyet P."/>
            <person name="Kachouri R."/>
            <person name="Kerrest A."/>
            <person name="Koszul R."/>
            <person name="Lemaire M."/>
            <person name="Lesur I."/>
            <person name="Ma L."/>
            <person name="Muller H."/>
            <person name="Nicaud J.-M."/>
            <person name="Nikolski M."/>
            <person name="Oztas S."/>
            <person name="Ozier-Kalogeropoulos O."/>
            <person name="Pellenz S."/>
            <person name="Potier S."/>
            <person name="Richard G.-F."/>
            <person name="Straub M.-L."/>
            <person name="Suleau A."/>
            <person name="Swennen D."/>
            <person name="Tekaia F."/>
            <person name="Wesolowski-Louvel M."/>
            <person name="Westhof E."/>
            <person name="Wirth B."/>
            <person name="Zeniou-Meyer M."/>
            <person name="Zivanovic Y."/>
            <person name="Bolotin-Fukuhara M."/>
            <person name="Thierry A."/>
            <person name="Bouchier C."/>
            <person name="Caudron B."/>
            <person name="Scarpelli C."/>
            <person name="Gaillardin C."/>
            <person name="Weissenbach J."/>
            <person name="Wincker P."/>
            <person name="Souciet J.-L."/>
        </authorList>
    </citation>
    <scope>NUCLEOTIDE SEQUENCE [LARGE SCALE GENOMIC DNA]</scope>
    <source>
        <strain>ATCC 2001 / BCRC 20586 / JCM 3761 / NBRC 0622 / NRRL Y-65 / CBS 138</strain>
    </source>
</reference>
<sequence length="198" mass="22088">MSAFVTCGATVPFPALVEAVLAPEFVGCLSREGYRVLCVQFGRGYDFEAQFTSVTCTRMPLESAEVSELRQLVRDERVTVMGYKVQDVVVLGFAYSNNILQIIDRYGDVVISHAGTGSILDSLRLNKKLIVVVNHTLMDNHQKQIAEKFQNLGHILATNPTAIELCDAMKRLKHEDLIPLSSETNTEFMERLKSIAYS</sequence>
<keyword id="KW-0256">Endoplasmic reticulum</keyword>
<keyword id="KW-0328">Glycosyltransferase</keyword>
<keyword id="KW-1185">Reference proteome</keyword>
<keyword id="KW-0808">Transferase</keyword>
<protein>
    <recommendedName>
        <fullName>UDP-N-acetylglucosamine transferase subunit ALG13</fullName>
        <ecNumber>2.4.1.141</ecNumber>
    </recommendedName>
    <alternativeName>
        <fullName>Asparagine-linked glycosylation protein 13</fullName>
    </alternativeName>
</protein>
<proteinExistence type="inferred from homology"/>
<accession>Q6FVR6</accession>
<name>ALG13_CANGA</name>
<comment type="function">
    <text evidence="1">Involved in protein N-glycosylation. Essential for the second step of the dolichol-linked oligosaccharide pathway (By similarity).</text>
</comment>
<comment type="catalytic activity">
    <reaction>
        <text>an N-acetyl-alpha-D-glucosaminyl-diphospho-di-trans,poly-cis-dolichol + UDP-N-acetyl-alpha-D-glucosamine = an N,N'-diacetylchitobiosyl-diphospho-di-trans,poly-cis-dolichol + UDP + H(+)</text>
        <dbReference type="Rhea" id="RHEA:23380"/>
        <dbReference type="Rhea" id="RHEA-COMP:19507"/>
        <dbReference type="Rhea" id="RHEA-COMP:19510"/>
        <dbReference type="ChEBI" id="CHEBI:15378"/>
        <dbReference type="ChEBI" id="CHEBI:57269"/>
        <dbReference type="ChEBI" id="CHEBI:57705"/>
        <dbReference type="ChEBI" id="CHEBI:58223"/>
        <dbReference type="ChEBI" id="CHEBI:58427"/>
        <dbReference type="EC" id="2.4.1.141"/>
    </reaction>
</comment>
<comment type="subunit">
    <text evidence="1">Heterodimer with ALG14 to form a functional enzyme.</text>
</comment>
<comment type="subcellular location">
    <subcellularLocation>
        <location evidence="1">Endoplasmic reticulum</location>
    </subcellularLocation>
</comment>
<comment type="similarity">
    <text evidence="2">Belongs to the glycosyltransferase 28 family.</text>
</comment>
<evidence type="ECO:0000250" key="1"/>
<evidence type="ECO:0000305" key="2"/>